<accession>C6E8M5</accession>
<name>NUOK2_GEOSM</name>
<protein>
    <recommendedName>
        <fullName evidence="1">NADH-quinone oxidoreductase subunit K 2</fullName>
        <ecNumber evidence="1">7.1.1.-</ecNumber>
    </recommendedName>
    <alternativeName>
        <fullName evidence="1">NADH dehydrogenase I subunit K 2</fullName>
    </alternativeName>
    <alternativeName>
        <fullName evidence="1">NDH-1 subunit K 2</fullName>
    </alternativeName>
</protein>
<keyword id="KW-0997">Cell inner membrane</keyword>
<keyword id="KW-1003">Cell membrane</keyword>
<keyword id="KW-0472">Membrane</keyword>
<keyword id="KW-0520">NAD</keyword>
<keyword id="KW-0874">Quinone</keyword>
<keyword id="KW-1278">Translocase</keyword>
<keyword id="KW-0812">Transmembrane</keyword>
<keyword id="KW-1133">Transmembrane helix</keyword>
<keyword id="KW-0813">Transport</keyword>
<keyword id="KW-0830">Ubiquinone</keyword>
<reference key="1">
    <citation type="submission" date="2009-07" db="EMBL/GenBank/DDBJ databases">
        <title>Complete sequence of Geobacter sp. M21.</title>
        <authorList>
            <consortium name="US DOE Joint Genome Institute"/>
            <person name="Lucas S."/>
            <person name="Copeland A."/>
            <person name="Lapidus A."/>
            <person name="Glavina del Rio T."/>
            <person name="Dalin E."/>
            <person name="Tice H."/>
            <person name="Bruce D."/>
            <person name="Goodwin L."/>
            <person name="Pitluck S."/>
            <person name="Saunders E."/>
            <person name="Brettin T."/>
            <person name="Detter J.C."/>
            <person name="Han C."/>
            <person name="Larimer F."/>
            <person name="Land M."/>
            <person name="Hauser L."/>
            <person name="Kyrpides N."/>
            <person name="Ovchinnikova G."/>
            <person name="Lovley D."/>
        </authorList>
    </citation>
    <scope>NUCLEOTIDE SEQUENCE [LARGE SCALE GENOMIC DNA]</scope>
    <source>
        <strain>M21</strain>
    </source>
</reference>
<sequence>MLAIENYLILSAILFAIGTIGVLTRRNAIVIFMCIELMLNAVNLTFIAFSRHLGNIDGQVFVFFVMTVAAAEAAVGLALMIAFFKNRESIDVEDVNLMKL</sequence>
<comment type="function">
    <text evidence="1">NDH-1 shuttles electrons from NADH, via FMN and iron-sulfur (Fe-S) centers, to quinones in the respiratory chain. The immediate electron acceptor for the enzyme in this species is believed to be ubiquinone. Couples the redox reaction to proton translocation (for every two electrons transferred, four hydrogen ions are translocated across the cytoplasmic membrane), and thus conserves the redox energy in a proton gradient.</text>
</comment>
<comment type="catalytic activity">
    <reaction evidence="1">
        <text>a quinone + NADH + 5 H(+)(in) = a quinol + NAD(+) + 4 H(+)(out)</text>
        <dbReference type="Rhea" id="RHEA:57888"/>
        <dbReference type="ChEBI" id="CHEBI:15378"/>
        <dbReference type="ChEBI" id="CHEBI:24646"/>
        <dbReference type="ChEBI" id="CHEBI:57540"/>
        <dbReference type="ChEBI" id="CHEBI:57945"/>
        <dbReference type="ChEBI" id="CHEBI:132124"/>
    </reaction>
</comment>
<comment type="subunit">
    <text evidence="1">NDH-1 is composed of 14 different subunits. Subunits NuoA, H, J, K, L, M, N constitute the membrane sector of the complex.</text>
</comment>
<comment type="subcellular location">
    <subcellularLocation>
        <location evidence="1">Cell inner membrane</location>
        <topology evidence="1">Multi-pass membrane protein</topology>
    </subcellularLocation>
</comment>
<comment type="similarity">
    <text evidence="1">Belongs to the complex I subunit 4L family.</text>
</comment>
<organism>
    <name type="scientific">Geobacter sp. (strain M21)</name>
    <dbReference type="NCBI Taxonomy" id="443144"/>
    <lineage>
        <taxon>Bacteria</taxon>
        <taxon>Pseudomonadati</taxon>
        <taxon>Thermodesulfobacteriota</taxon>
        <taxon>Desulfuromonadia</taxon>
        <taxon>Geobacterales</taxon>
        <taxon>Geobacteraceae</taxon>
        <taxon>Geobacter</taxon>
    </lineage>
</organism>
<evidence type="ECO:0000255" key="1">
    <source>
        <dbReference type="HAMAP-Rule" id="MF_01456"/>
    </source>
</evidence>
<dbReference type="EC" id="7.1.1.-" evidence="1"/>
<dbReference type="EMBL" id="CP001661">
    <property type="protein sequence ID" value="ACT20016.1"/>
    <property type="molecule type" value="Genomic_DNA"/>
</dbReference>
<dbReference type="SMR" id="C6E8M5"/>
<dbReference type="STRING" id="443144.GM21_4000"/>
<dbReference type="KEGG" id="gem:GM21_4000"/>
<dbReference type="eggNOG" id="COG0713">
    <property type="taxonomic scope" value="Bacteria"/>
</dbReference>
<dbReference type="HOGENOM" id="CLU_144724_0_0_7"/>
<dbReference type="OrthoDB" id="9810120at2"/>
<dbReference type="GO" id="GO:0030964">
    <property type="term" value="C:NADH dehydrogenase complex"/>
    <property type="evidence" value="ECO:0007669"/>
    <property type="project" value="TreeGrafter"/>
</dbReference>
<dbReference type="GO" id="GO:0005886">
    <property type="term" value="C:plasma membrane"/>
    <property type="evidence" value="ECO:0007669"/>
    <property type="project" value="UniProtKB-SubCell"/>
</dbReference>
<dbReference type="GO" id="GO:0050136">
    <property type="term" value="F:NADH:ubiquinone reductase (non-electrogenic) activity"/>
    <property type="evidence" value="ECO:0007669"/>
    <property type="project" value="UniProtKB-UniRule"/>
</dbReference>
<dbReference type="GO" id="GO:0048038">
    <property type="term" value="F:quinone binding"/>
    <property type="evidence" value="ECO:0007669"/>
    <property type="project" value="UniProtKB-KW"/>
</dbReference>
<dbReference type="GO" id="GO:0042773">
    <property type="term" value="P:ATP synthesis coupled electron transport"/>
    <property type="evidence" value="ECO:0007669"/>
    <property type="project" value="InterPro"/>
</dbReference>
<dbReference type="FunFam" id="1.10.287.3510:FF:000001">
    <property type="entry name" value="NADH-quinone oxidoreductase subunit K"/>
    <property type="match status" value="1"/>
</dbReference>
<dbReference type="Gene3D" id="1.10.287.3510">
    <property type="match status" value="1"/>
</dbReference>
<dbReference type="HAMAP" id="MF_01456">
    <property type="entry name" value="NDH1_NuoK"/>
    <property type="match status" value="1"/>
</dbReference>
<dbReference type="InterPro" id="IPR001133">
    <property type="entry name" value="NADH_UbQ_OxRdtase_chain4L/K"/>
</dbReference>
<dbReference type="InterPro" id="IPR039428">
    <property type="entry name" value="NUOK/Mnh_C1-like"/>
</dbReference>
<dbReference type="NCBIfam" id="NF004320">
    <property type="entry name" value="PRK05715.1-2"/>
    <property type="match status" value="1"/>
</dbReference>
<dbReference type="NCBIfam" id="NF004321">
    <property type="entry name" value="PRK05715.1-3"/>
    <property type="match status" value="1"/>
</dbReference>
<dbReference type="NCBIfam" id="NF004323">
    <property type="entry name" value="PRK05715.1-5"/>
    <property type="match status" value="1"/>
</dbReference>
<dbReference type="PANTHER" id="PTHR11434:SF21">
    <property type="entry name" value="NADH DEHYDROGENASE SUBUNIT 4L-RELATED"/>
    <property type="match status" value="1"/>
</dbReference>
<dbReference type="PANTHER" id="PTHR11434">
    <property type="entry name" value="NADH-UBIQUINONE OXIDOREDUCTASE SUBUNIT ND4L"/>
    <property type="match status" value="1"/>
</dbReference>
<dbReference type="Pfam" id="PF00420">
    <property type="entry name" value="Oxidored_q2"/>
    <property type="match status" value="1"/>
</dbReference>
<proteinExistence type="inferred from homology"/>
<feature type="chain" id="PRO_0000390081" description="NADH-quinone oxidoreductase subunit K 2">
    <location>
        <begin position="1"/>
        <end position="100"/>
    </location>
</feature>
<feature type="transmembrane region" description="Helical" evidence="1">
    <location>
        <begin position="2"/>
        <end position="22"/>
    </location>
</feature>
<feature type="transmembrane region" description="Helical" evidence="1">
    <location>
        <begin position="29"/>
        <end position="49"/>
    </location>
</feature>
<feature type="transmembrane region" description="Helical" evidence="1">
    <location>
        <begin position="61"/>
        <end position="81"/>
    </location>
</feature>
<gene>
    <name evidence="1" type="primary">nuoK2</name>
    <name type="ordered locus">GM21_4000</name>
</gene>